<sequence>MTVTDLVLVLFIVALLAYAIYDQFIMPRRNGPTLLAVPLLRRGRVDSVIFVGLVAILIYNNVTSHGAQITTWLLCALALMGFYIFWVRAPRIIFKQKGFFFANVWIEYNRIKEMNLSEDGVLVMQLEQRRLLIRVRNIDDLERIYKLLVSSQ</sequence>
<accession>A8AFN6</accession>
<name>Y1158_CITK8</name>
<feature type="chain" id="PRO_1000064578" description="UPF0266 membrane protein CKO_01158">
    <location>
        <begin position="1"/>
        <end position="152"/>
    </location>
</feature>
<feature type="transmembrane region" description="Helical" evidence="1">
    <location>
        <begin position="6"/>
        <end position="26"/>
    </location>
</feature>
<feature type="transmembrane region" description="Helical" evidence="1">
    <location>
        <begin position="45"/>
        <end position="65"/>
    </location>
</feature>
<feature type="transmembrane region" description="Helical" evidence="1">
    <location>
        <begin position="67"/>
        <end position="87"/>
    </location>
</feature>
<proteinExistence type="inferred from homology"/>
<protein>
    <recommendedName>
        <fullName evidence="1">UPF0266 membrane protein CKO_01158</fullName>
    </recommendedName>
</protein>
<evidence type="ECO:0000255" key="1">
    <source>
        <dbReference type="HAMAP-Rule" id="MF_01071"/>
    </source>
</evidence>
<keyword id="KW-0997">Cell inner membrane</keyword>
<keyword id="KW-1003">Cell membrane</keyword>
<keyword id="KW-0472">Membrane</keyword>
<keyword id="KW-1185">Reference proteome</keyword>
<keyword id="KW-0812">Transmembrane</keyword>
<keyword id="KW-1133">Transmembrane helix</keyword>
<organism>
    <name type="scientific">Citrobacter koseri (strain ATCC BAA-895 / CDC 4225-83 / SGSC4696)</name>
    <dbReference type="NCBI Taxonomy" id="290338"/>
    <lineage>
        <taxon>Bacteria</taxon>
        <taxon>Pseudomonadati</taxon>
        <taxon>Pseudomonadota</taxon>
        <taxon>Gammaproteobacteria</taxon>
        <taxon>Enterobacterales</taxon>
        <taxon>Enterobacteriaceae</taxon>
        <taxon>Citrobacter</taxon>
    </lineage>
</organism>
<comment type="subcellular location">
    <subcellularLocation>
        <location evidence="1">Cell inner membrane</location>
        <topology evidence="1">Multi-pass membrane protein</topology>
    </subcellularLocation>
</comment>
<comment type="similarity">
    <text evidence="1">Belongs to the UPF0266 family.</text>
</comment>
<reference key="1">
    <citation type="submission" date="2007-08" db="EMBL/GenBank/DDBJ databases">
        <authorList>
            <consortium name="The Citrobacter koseri Genome Sequencing Project"/>
            <person name="McClelland M."/>
            <person name="Sanderson E.K."/>
            <person name="Porwollik S."/>
            <person name="Spieth J."/>
            <person name="Clifton W.S."/>
            <person name="Latreille P."/>
            <person name="Courtney L."/>
            <person name="Wang C."/>
            <person name="Pepin K."/>
            <person name="Bhonagiri V."/>
            <person name="Nash W."/>
            <person name="Johnson M."/>
            <person name="Thiruvilangam P."/>
            <person name="Wilson R."/>
        </authorList>
    </citation>
    <scope>NUCLEOTIDE SEQUENCE [LARGE SCALE GENOMIC DNA]</scope>
    <source>
        <strain>ATCC BAA-895 / CDC 4225-83 / SGSC4696</strain>
    </source>
</reference>
<gene>
    <name type="ordered locus">CKO_01158</name>
</gene>
<dbReference type="EMBL" id="CP000822">
    <property type="protein sequence ID" value="ABV12299.1"/>
    <property type="molecule type" value="Genomic_DNA"/>
</dbReference>
<dbReference type="RefSeq" id="WP_012132052.1">
    <property type="nucleotide sequence ID" value="NC_009792.1"/>
</dbReference>
<dbReference type="STRING" id="290338.CKO_01158"/>
<dbReference type="GeneID" id="45135293"/>
<dbReference type="KEGG" id="cko:CKO_01158"/>
<dbReference type="HOGENOM" id="CLU_133645_0_0_6"/>
<dbReference type="OrthoDB" id="2360740at2"/>
<dbReference type="Proteomes" id="UP000008148">
    <property type="component" value="Chromosome"/>
</dbReference>
<dbReference type="GO" id="GO:0005886">
    <property type="term" value="C:plasma membrane"/>
    <property type="evidence" value="ECO:0007669"/>
    <property type="project" value="UniProtKB-SubCell"/>
</dbReference>
<dbReference type="HAMAP" id="MF_01071">
    <property type="entry name" value="UPF0266"/>
    <property type="match status" value="1"/>
</dbReference>
<dbReference type="InterPro" id="IPR009328">
    <property type="entry name" value="DUF986"/>
</dbReference>
<dbReference type="NCBIfam" id="NF002791">
    <property type="entry name" value="PRK02913.1"/>
    <property type="match status" value="1"/>
</dbReference>
<dbReference type="Pfam" id="PF06173">
    <property type="entry name" value="DUF986"/>
    <property type="match status" value="1"/>
</dbReference>
<dbReference type="PIRSF" id="PIRSF020687">
    <property type="entry name" value="UCP020687"/>
    <property type="match status" value="1"/>
</dbReference>